<accession>A1S4P0</accession>
<comment type="similarity">
    <text evidence="1">Belongs to the universal ribosomal protein uS2 family.</text>
</comment>
<comment type="sequence caution" evidence="2">
    <conflict type="erroneous initiation">
        <sequence resource="EMBL-CDS" id="ABL99346"/>
    </conflict>
</comment>
<reference key="1">
    <citation type="submission" date="2006-12" db="EMBL/GenBank/DDBJ databases">
        <title>Complete sequence of Shewanella amazonensis SB2B.</title>
        <authorList>
            <consortium name="US DOE Joint Genome Institute"/>
            <person name="Copeland A."/>
            <person name="Lucas S."/>
            <person name="Lapidus A."/>
            <person name="Barry K."/>
            <person name="Detter J.C."/>
            <person name="Glavina del Rio T."/>
            <person name="Hammon N."/>
            <person name="Israni S."/>
            <person name="Dalin E."/>
            <person name="Tice H."/>
            <person name="Pitluck S."/>
            <person name="Munk A.C."/>
            <person name="Brettin T."/>
            <person name="Bruce D."/>
            <person name="Han C."/>
            <person name="Tapia R."/>
            <person name="Gilna P."/>
            <person name="Schmutz J."/>
            <person name="Larimer F."/>
            <person name="Land M."/>
            <person name="Hauser L."/>
            <person name="Kyrpides N."/>
            <person name="Mikhailova N."/>
            <person name="Fredrickson J."/>
            <person name="Richardson P."/>
        </authorList>
    </citation>
    <scope>NUCLEOTIDE SEQUENCE [LARGE SCALE GENOMIC DNA]</scope>
    <source>
        <strain>ATCC BAA-1098 / SB2B</strain>
    </source>
</reference>
<gene>
    <name evidence="1" type="primary">rpsB</name>
    <name type="ordered locus">Sama_1139</name>
</gene>
<protein>
    <recommendedName>
        <fullName evidence="1">Small ribosomal subunit protein uS2</fullName>
    </recommendedName>
    <alternativeName>
        <fullName evidence="2">30S ribosomal protein S2</fullName>
    </alternativeName>
</protein>
<keyword id="KW-1185">Reference proteome</keyword>
<keyword id="KW-0687">Ribonucleoprotein</keyword>
<keyword id="KW-0689">Ribosomal protein</keyword>
<organism>
    <name type="scientific">Shewanella amazonensis (strain ATCC BAA-1098 / SB2B)</name>
    <dbReference type="NCBI Taxonomy" id="326297"/>
    <lineage>
        <taxon>Bacteria</taxon>
        <taxon>Pseudomonadati</taxon>
        <taxon>Pseudomonadota</taxon>
        <taxon>Gammaproteobacteria</taxon>
        <taxon>Alteromonadales</taxon>
        <taxon>Shewanellaceae</taxon>
        <taxon>Shewanella</taxon>
    </lineage>
</organism>
<dbReference type="EMBL" id="CP000507">
    <property type="protein sequence ID" value="ABL99346.1"/>
    <property type="status" value="ALT_INIT"/>
    <property type="molecule type" value="Genomic_DNA"/>
</dbReference>
<dbReference type="RefSeq" id="WP_041410171.1">
    <property type="nucleotide sequence ID" value="NC_008700.1"/>
</dbReference>
<dbReference type="SMR" id="A1S4P0"/>
<dbReference type="STRING" id="326297.Sama_1139"/>
<dbReference type="KEGG" id="saz:Sama_1139"/>
<dbReference type="eggNOG" id="COG0052">
    <property type="taxonomic scope" value="Bacteria"/>
</dbReference>
<dbReference type="HOGENOM" id="CLU_040318_1_0_6"/>
<dbReference type="OrthoDB" id="9808036at2"/>
<dbReference type="Proteomes" id="UP000009175">
    <property type="component" value="Chromosome"/>
</dbReference>
<dbReference type="GO" id="GO:0022627">
    <property type="term" value="C:cytosolic small ribosomal subunit"/>
    <property type="evidence" value="ECO:0007669"/>
    <property type="project" value="TreeGrafter"/>
</dbReference>
<dbReference type="GO" id="GO:0003735">
    <property type="term" value="F:structural constituent of ribosome"/>
    <property type="evidence" value="ECO:0007669"/>
    <property type="project" value="InterPro"/>
</dbReference>
<dbReference type="GO" id="GO:0006412">
    <property type="term" value="P:translation"/>
    <property type="evidence" value="ECO:0007669"/>
    <property type="project" value="UniProtKB-UniRule"/>
</dbReference>
<dbReference type="CDD" id="cd01425">
    <property type="entry name" value="RPS2"/>
    <property type="match status" value="1"/>
</dbReference>
<dbReference type="FunFam" id="1.10.287.610:FF:000001">
    <property type="entry name" value="30S ribosomal protein S2"/>
    <property type="match status" value="1"/>
</dbReference>
<dbReference type="Gene3D" id="3.40.50.10490">
    <property type="entry name" value="Glucose-6-phosphate isomerase like protein, domain 1"/>
    <property type="match status" value="1"/>
</dbReference>
<dbReference type="Gene3D" id="1.10.287.610">
    <property type="entry name" value="Helix hairpin bin"/>
    <property type="match status" value="1"/>
</dbReference>
<dbReference type="HAMAP" id="MF_00291_B">
    <property type="entry name" value="Ribosomal_uS2_B"/>
    <property type="match status" value="1"/>
</dbReference>
<dbReference type="InterPro" id="IPR001865">
    <property type="entry name" value="Ribosomal_uS2"/>
</dbReference>
<dbReference type="InterPro" id="IPR005706">
    <property type="entry name" value="Ribosomal_uS2_bac/mit/plastid"/>
</dbReference>
<dbReference type="InterPro" id="IPR018130">
    <property type="entry name" value="Ribosomal_uS2_CS"/>
</dbReference>
<dbReference type="InterPro" id="IPR023591">
    <property type="entry name" value="Ribosomal_uS2_flav_dom_sf"/>
</dbReference>
<dbReference type="NCBIfam" id="TIGR01011">
    <property type="entry name" value="rpsB_bact"/>
    <property type="match status" value="1"/>
</dbReference>
<dbReference type="PANTHER" id="PTHR12534">
    <property type="entry name" value="30S RIBOSOMAL PROTEIN S2 PROKARYOTIC AND ORGANELLAR"/>
    <property type="match status" value="1"/>
</dbReference>
<dbReference type="PANTHER" id="PTHR12534:SF0">
    <property type="entry name" value="SMALL RIBOSOMAL SUBUNIT PROTEIN US2M"/>
    <property type="match status" value="1"/>
</dbReference>
<dbReference type="Pfam" id="PF00318">
    <property type="entry name" value="Ribosomal_S2"/>
    <property type="match status" value="1"/>
</dbReference>
<dbReference type="PRINTS" id="PR00395">
    <property type="entry name" value="RIBOSOMALS2"/>
</dbReference>
<dbReference type="SUPFAM" id="SSF52313">
    <property type="entry name" value="Ribosomal protein S2"/>
    <property type="match status" value="1"/>
</dbReference>
<dbReference type="PROSITE" id="PS00962">
    <property type="entry name" value="RIBOSOMAL_S2_1"/>
    <property type="match status" value="1"/>
</dbReference>
<dbReference type="PROSITE" id="PS00963">
    <property type="entry name" value="RIBOSOMAL_S2_2"/>
    <property type="match status" value="1"/>
</dbReference>
<proteinExistence type="inferred from homology"/>
<name>RS2_SHEAM</name>
<evidence type="ECO:0000255" key="1">
    <source>
        <dbReference type="HAMAP-Rule" id="MF_00291"/>
    </source>
</evidence>
<evidence type="ECO:0000305" key="2"/>
<feature type="chain" id="PRO_0000352036" description="Small ribosomal subunit protein uS2">
    <location>
        <begin position="1"/>
        <end position="242"/>
    </location>
</feature>
<sequence>MTTVSMRDMLQAGVHFGHQTRYWNPKMKPFIFGARNGVHIINLEHTVPMFNEALAFISNVASKKGKILFVGTKRAASEAIKEAAVSCDQYYVDHRWLGGMLTNWKTVRQSIKRLKELETQSVDGTFDKLTKKEALMRTRELEKLEKSLGGIKNMGGLPDALFVIGADHEHIAIKEANNLGIPVVAVVDTNASPDGVNYIVPGNDDAMRAIRLYTEAAATAAKAGRGQDLAVQAEQDGFVEAE</sequence>